<keyword id="KW-0067">ATP-binding</keyword>
<keyword id="KW-0143">Chaperone</keyword>
<keyword id="KW-0479">Metal-binding</keyword>
<keyword id="KW-0547">Nucleotide-binding</keyword>
<keyword id="KW-0862">Zinc</keyword>
<evidence type="ECO:0000255" key="1">
    <source>
        <dbReference type="HAMAP-Rule" id="MF_00175"/>
    </source>
</evidence>
<evidence type="ECO:0000255" key="2">
    <source>
        <dbReference type="PROSITE-ProRule" id="PRU01250"/>
    </source>
</evidence>
<evidence type="ECO:0000256" key="3">
    <source>
        <dbReference type="SAM" id="MobiDB-lite"/>
    </source>
</evidence>
<reference key="1">
    <citation type="submission" date="2005-09" db="EMBL/GenBank/DDBJ databases">
        <title>Complete genome sequence of Clostridium kluyveri and comparative genomics of Clostridia species.</title>
        <authorList>
            <person name="Inui M."/>
            <person name="Nonaka H."/>
            <person name="Shinoda Y."/>
            <person name="Ikenaga Y."/>
            <person name="Abe M."/>
            <person name="Naito K."/>
            <person name="Vertes A.A."/>
            <person name="Yukawa H."/>
        </authorList>
    </citation>
    <scope>NUCLEOTIDE SEQUENCE [LARGE SCALE GENOMIC DNA]</scope>
    <source>
        <strain>NBRC 12016</strain>
    </source>
</reference>
<dbReference type="EMBL" id="AP009049">
    <property type="protein sequence ID" value="BAH08009.1"/>
    <property type="molecule type" value="Genomic_DNA"/>
</dbReference>
<dbReference type="SMR" id="B9E684"/>
<dbReference type="KEGG" id="ckr:CKR_2958"/>
<dbReference type="HOGENOM" id="CLU_014218_8_2_9"/>
<dbReference type="Proteomes" id="UP000007969">
    <property type="component" value="Chromosome"/>
</dbReference>
<dbReference type="GO" id="GO:0009376">
    <property type="term" value="C:HslUV protease complex"/>
    <property type="evidence" value="ECO:0007669"/>
    <property type="project" value="TreeGrafter"/>
</dbReference>
<dbReference type="GO" id="GO:0005524">
    <property type="term" value="F:ATP binding"/>
    <property type="evidence" value="ECO:0007669"/>
    <property type="project" value="UniProtKB-UniRule"/>
</dbReference>
<dbReference type="GO" id="GO:0016887">
    <property type="term" value="F:ATP hydrolysis activity"/>
    <property type="evidence" value="ECO:0007669"/>
    <property type="project" value="InterPro"/>
</dbReference>
<dbReference type="GO" id="GO:0140662">
    <property type="term" value="F:ATP-dependent protein folding chaperone"/>
    <property type="evidence" value="ECO:0007669"/>
    <property type="project" value="InterPro"/>
</dbReference>
<dbReference type="GO" id="GO:0046983">
    <property type="term" value="F:protein dimerization activity"/>
    <property type="evidence" value="ECO:0007669"/>
    <property type="project" value="InterPro"/>
</dbReference>
<dbReference type="GO" id="GO:0051082">
    <property type="term" value="F:unfolded protein binding"/>
    <property type="evidence" value="ECO:0007669"/>
    <property type="project" value="UniProtKB-UniRule"/>
</dbReference>
<dbReference type="GO" id="GO:0008270">
    <property type="term" value="F:zinc ion binding"/>
    <property type="evidence" value="ECO:0007669"/>
    <property type="project" value="InterPro"/>
</dbReference>
<dbReference type="GO" id="GO:0051301">
    <property type="term" value="P:cell division"/>
    <property type="evidence" value="ECO:0007669"/>
    <property type="project" value="TreeGrafter"/>
</dbReference>
<dbReference type="GO" id="GO:0051603">
    <property type="term" value="P:proteolysis involved in protein catabolic process"/>
    <property type="evidence" value="ECO:0007669"/>
    <property type="project" value="TreeGrafter"/>
</dbReference>
<dbReference type="CDD" id="cd19497">
    <property type="entry name" value="RecA-like_ClpX"/>
    <property type="match status" value="1"/>
</dbReference>
<dbReference type="FunFam" id="1.10.8.60:FF:000002">
    <property type="entry name" value="ATP-dependent Clp protease ATP-binding subunit ClpX"/>
    <property type="match status" value="1"/>
</dbReference>
<dbReference type="FunFam" id="3.40.50.300:FF:000005">
    <property type="entry name" value="ATP-dependent Clp protease ATP-binding subunit ClpX"/>
    <property type="match status" value="1"/>
</dbReference>
<dbReference type="Gene3D" id="1.10.8.60">
    <property type="match status" value="1"/>
</dbReference>
<dbReference type="Gene3D" id="6.20.220.10">
    <property type="entry name" value="ClpX chaperone, C4-type zinc finger domain"/>
    <property type="match status" value="1"/>
</dbReference>
<dbReference type="Gene3D" id="3.40.50.300">
    <property type="entry name" value="P-loop containing nucleotide triphosphate hydrolases"/>
    <property type="match status" value="1"/>
</dbReference>
<dbReference type="HAMAP" id="MF_00175">
    <property type="entry name" value="ClpX"/>
    <property type="match status" value="1"/>
</dbReference>
<dbReference type="InterPro" id="IPR003593">
    <property type="entry name" value="AAA+_ATPase"/>
</dbReference>
<dbReference type="InterPro" id="IPR050052">
    <property type="entry name" value="ATP-dep_Clp_protease_ClpX"/>
</dbReference>
<dbReference type="InterPro" id="IPR003959">
    <property type="entry name" value="ATPase_AAA_core"/>
</dbReference>
<dbReference type="InterPro" id="IPR019489">
    <property type="entry name" value="Clp_ATPase_C"/>
</dbReference>
<dbReference type="InterPro" id="IPR004487">
    <property type="entry name" value="Clp_protease_ATP-bd_su_ClpX"/>
</dbReference>
<dbReference type="InterPro" id="IPR046425">
    <property type="entry name" value="ClpX_bact"/>
</dbReference>
<dbReference type="InterPro" id="IPR027417">
    <property type="entry name" value="P-loop_NTPase"/>
</dbReference>
<dbReference type="InterPro" id="IPR010603">
    <property type="entry name" value="Znf_CppX_C4"/>
</dbReference>
<dbReference type="InterPro" id="IPR038366">
    <property type="entry name" value="Znf_CppX_C4_sf"/>
</dbReference>
<dbReference type="NCBIfam" id="TIGR00382">
    <property type="entry name" value="clpX"/>
    <property type="match status" value="1"/>
</dbReference>
<dbReference type="NCBIfam" id="NF003745">
    <property type="entry name" value="PRK05342.1"/>
    <property type="match status" value="1"/>
</dbReference>
<dbReference type="PANTHER" id="PTHR48102:SF7">
    <property type="entry name" value="ATP-DEPENDENT CLP PROTEASE ATP-BINDING SUBUNIT CLPX-LIKE, MITOCHONDRIAL"/>
    <property type="match status" value="1"/>
</dbReference>
<dbReference type="PANTHER" id="PTHR48102">
    <property type="entry name" value="ATP-DEPENDENT CLP PROTEASE ATP-BINDING SUBUNIT CLPX-LIKE, MITOCHONDRIAL-RELATED"/>
    <property type="match status" value="1"/>
</dbReference>
<dbReference type="Pfam" id="PF07724">
    <property type="entry name" value="AAA_2"/>
    <property type="match status" value="1"/>
</dbReference>
<dbReference type="Pfam" id="PF10431">
    <property type="entry name" value="ClpB_D2-small"/>
    <property type="match status" value="1"/>
</dbReference>
<dbReference type="Pfam" id="PF06689">
    <property type="entry name" value="zf-C4_ClpX"/>
    <property type="match status" value="1"/>
</dbReference>
<dbReference type="SMART" id="SM00382">
    <property type="entry name" value="AAA"/>
    <property type="match status" value="1"/>
</dbReference>
<dbReference type="SMART" id="SM01086">
    <property type="entry name" value="ClpB_D2-small"/>
    <property type="match status" value="1"/>
</dbReference>
<dbReference type="SMART" id="SM00994">
    <property type="entry name" value="zf-C4_ClpX"/>
    <property type="match status" value="1"/>
</dbReference>
<dbReference type="SUPFAM" id="SSF57716">
    <property type="entry name" value="Glucocorticoid receptor-like (DNA-binding domain)"/>
    <property type="match status" value="1"/>
</dbReference>
<dbReference type="SUPFAM" id="SSF52540">
    <property type="entry name" value="P-loop containing nucleoside triphosphate hydrolases"/>
    <property type="match status" value="1"/>
</dbReference>
<dbReference type="PROSITE" id="PS51902">
    <property type="entry name" value="CLPX_ZB"/>
    <property type="match status" value="1"/>
</dbReference>
<name>CLPX_CLOK1</name>
<protein>
    <recommendedName>
        <fullName evidence="1">ATP-dependent Clp protease ATP-binding subunit ClpX</fullName>
    </recommendedName>
</protein>
<proteinExistence type="inferred from homology"/>
<organism>
    <name type="scientific">Clostridium kluyveri (strain NBRC 12016)</name>
    <dbReference type="NCBI Taxonomy" id="583346"/>
    <lineage>
        <taxon>Bacteria</taxon>
        <taxon>Bacillati</taxon>
        <taxon>Bacillota</taxon>
        <taxon>Clostridia</taxon>
        <taxon>Eubacteriales</taxon>
        <taxon>Clostridiaceae</taxon>
        <taxon>Clostridium</taxon>
    </lineage>
</organism>
<comment type="function">
    <text evidence="1">ATP-dependent specificity component of the Clp protease. It directs the protease to specific substrates. Can perform chaperone functions in the absence of ClpP.</text>
</comment>
<comment type="subunit">
    <text evidence="1">Component of the ClpX-ClpP complex. Forms a hexameric ring that, in the presence of ATP, binds to fourteen ClpP subunits assembled into a disk-like structure with a central cavity, resembling the structure of eukaryotic proteasomes.</text>
</comment>
<comment type="similarity">
    <text evidence="1">Belongs to the ClpX chaperone family.</text>
</comment>
<feature type="chain" id="PRO_1000123829" description="ATP-dependent Clp protease ATP-binding subunit ClpX">
    <location>
        <begin position="1"/>
        <end position="432"/>
    </location>
</feature>
<feature type="domain" description="ClpX-type ZB" evidence="2">
    <location>
        <begin position="2"/>
        <end position="55"/>
    </location>
</feature>
<feature type="region of interest" description="Disordered" evidence="3">
    <location>
        <begin position="411"/>
        <end position="432"/>
    </location>
</feature>
<feature type="compositionally biased region" description="Basic residues" evidence="3">
    <location>
        <begin position="416"/>
        <end position="426"/>
    </location>
</feature>
<feature type="binding site" evidence="2">
    <location>
        <position position="14"/>
    </location>
    <ligand>
        <name>Zn(2+)</name>
        <dbReference type="ChEBI" id="CHEBI:29105"/>
    </ligand>
</feature>
<feature type="binding site" evidence="2">
    <location>
        <position position="17"/>
    </location>
    <ligand>
        <name>Zn(2+)</name>
        <dbReference type="ChEBI" id="CHEBI:29105"/>
    </ligand>
</feature>
<feature type="binding site" evidence="2">
    <location>
        <position position="36"/>
    </location>
    <ligand>
        <name>Zn(2+)</name>
        <dbReference type="ChEBI" id="CHEBI:29105"/>
    </ligand>
</feature>
<feature type="binding site" evidence="2">
    <location>
        <position position="39"/>
    </location>
    <ligand>
        <name>Zn(2+)</name>
        <dbReference type="ChEBI" id="CHEBI:29105"/>
    </ligand>
</feature>
<feature type="binding site" evidence="1">
    <location>
        <begin position="119"/>
        <end position="126"/>
    </location>
    <ligand>
        <name>ATP</name>
        <dbReference type="ChEBI" id="CHEBI:30616"/>
    </ligand>
</feature>
<accession>B9E684</accession>
<sequence length="432" mass="48073">MKMAKNDDKKQLKCSFCGKTQDQVRRLIAGPGVYICDECIELCSEIISDEFEEDIQIDMTSIPKPVEIKNYLDQYVIGQEDSKKSLSVAVYNHYKRINSNNNSNDDVELQKSNILLLGPTGSGKTLLAQTLARFLNVPFAIADATTLTEAGYVGEDVENILLKLIQNADYDIERAEHGIVYIDEIDKIARKSENPSITRDVSGEGVQQALLKILEGTVASVPPQGGRKHPHQEFIQINTTNILFICGGAFDGIDSIIERRTRVSTLGFGAEIQSKKDKDIGKLLKQIMPGDLLKFGLIPEFVGRIPIIVTLEALDRAALISILKEPKNALVKQYKKLFELDDVELEFKDEALEAIADEALKRNTGARGLRAIIEETMKDVMFDIPSKEEIAKVIINKDAVSTKMPELIEAENGKRTPIKLKKSRTRKGPETA</sequence>
<gene>
    <name evidence="1" type="primary">clpX</name>
    <name type="ordered locus">CKR_2958</name>
</gene>